<protein>
    <recommendedName>
        <fullName evidence="1">Tryptophan synthase alpha chain</fullName>
        <ecNumber evidence="1">4.2.1.20</ecNumber>
    </recommendedName>
</protein>
<name>TRPA_DESDA</name>
<evidence type="ECO:0000255" key="1">
    <source>
        <dbReference type="HAMAP-Rule" id="MF_00131"/>
    </source>
</evidence>
<reference key="1">
    <citation type="submission" date="2009-01" db="EMBL/GenBank/DDBJ databases">
        <title>Complete sequence of Desulfovibrio desulfuricans subsp. desulfuricans str. ATCC 27774.</title>
        <authorList>
            <consortium name="US DOE Joint Genome Institute"/>
            <person name="Lucas S."/>
            <person name="Copeland A."/>
            <person name="Lapidus A."/>
            <person name="Glavina del Rio T."/>
            <person name="Tice H."/>
            <person name="Bruce D."/>
            <person name="Goodwin L."/>
            <person name="Pitluck S."/>
            <person name="Sims D."/>
            <person name="Lu M."/>
            <person name="Kiss H."/>
            <person name="Meineke L."/>
            <person name="Brettin T."/>
            <person name="Detter J.C."/>
            <person name="Han C."/>
            <person name="Larimer F."/>
            <person name="Land M."/>
            <person name="Hauser L."/>
            <person name="Kyrpides N."/>
            <person name="Ovchinnikova G."/>
            <person name="Hazen T.C."/>
        </authorList>
    </citation>
    <scope>NUCLEOTIDE SEQUENCE [LARGE SCALE GENOMIC DNA]</scope>
    <source>
        <strain>ATCC 27774 / DSM 6949 / MB</strain>
    </source>
</reference>
<organism>
    <name type="scientific">Desulfovibrio desulfuricans (strain ATCC 27774 / DSM 6949 / MB)</name>
    <dbReference type="NCBI Taxonomy" id="525146"/>
    <lineage>
        <taxon>Bacteria</taxon>
        <taxon>Pseudomonadati</taxon>
        <taxon>Thermodesulfobacteriota</taxon>
        <taxon>Desulfovibrionia</taxon>
        <taxon>Desulfovibrionales</taxon>
        <taxon>Desulfovibrionaceae</taxon>
        <taxon>Desulfovibrio</taxon>
    </lineage>
</organism>
<dbReference type="EC" id="4.2.1.20" evidence="1"/>
<dbReference type="EMBL" id="CP001358">
    <property type="protein sequence ID" value="ACL49487.1"/>
    <property type="molecule type" value="Genomic_DNA"/>
</dbReference>
<dbReference type="SMR" id="B8J160"/>
<dbReference type="STRING" id="525146.Ddes_1587"/>
<dbReference type="KEGG" id="dds:Ddes_1587"/>
<dbReference type="eggNOG" id="COG0159">
    <property type="taxonomic scope" value="Bacteria"/>
</dbReference>
<dbReference type="HOGENOM" id="CLU_016734_0_0_7"/>
<dbReference type="UniPathway" id="UPA00035">
    <property type="reaction ID" value="UER00044"/>
</dbReference>
<dbReference type="GO" id="GO:0005829">
    <property type="term" value="C:cytosol"/>
    <property type="evidence" value="ECO:0007669"/>
    <property type="project" value="TreeGrafter"/>
</dbReference>
<dbReference type="GO" id="GO:0004834">
    <property type="term" value="F:tryptophan synthase activity"/>
    <property type="evidence" value="ECO:0007669"/>
    <property type="project" value="UniProtKB-UniRule"/>
</dbReference>
<dbReference type="CDD" id="cd04724">
    <property type="entry name" value="Tryptophan_synthase_alpha"/>
    <property type="match status" value="1"/>
</dbReference>
<dbReference type="Gene3D" id="3.20.20.70">
    <property type="entry name" value="Aldolase class I"/>
    <property type="match status" value="1"/>
</dbReference>
<dbReference type="HAMAP" id="MF_00131">
    <property type="entry name" value="Trp_synth_alpha"/>
    <property type="match status" value="1"/>
</dbReference>
<dbReference type="InterPro" id="IPR013785">
    <property type="entry name" value="Aldolase_TIM"/>
</dbReference>
<dbReference type="InterPro" id="IPR011060">
    <property type="entry name" value="RibuloseP-bd_barrel"/>
</dbReference>
<dbReference type="InterPro" id="IPR018204">
    <property type="entry name" value="Trp_synthase_alpha_AS"/>
</dbReference>
<dbReference type="InterPro" id="IPR002028">
    <property type="entry name" value="Trp_synthase_suA"/>
</dbReference>
<dbReference type="NCBIfam" id="TIGR00262">
    <property type="entry name" value="trpA"/>
    <property type="match status" value="1"/>
</dbReference>
<dbReference type="PANTHER" id="PTHR43406:SF1">
    <property type="entry name" value="TRYPTOPHAN SYNTHASE ALPHA CHAIN, CHLOROPLASTIC"/>
    <property type="match status" value="1"/>
</dbReference>
<dbReference type="PANTHER" id="PTHR43406">
    <property type="entry name" value="TRYPTOPHAN SYNTHASE, ALPHA CHAIN"/>
    <property type="match status" value="1"/>
</dbReference>
<dbReference type="Pfam" id="PF00290">
    <property type="entry name" value="Trp_syntA"/>
    <property type="match status" value="1"/>
</dbReference>
<dbReference type="SUPFAM" id="SSF51366">
    <property type="entry name" value="Ribulose-phoshate binding barrel"/>
    <property type="match status" value="1"/>
</dbReference>
<dbReference type="PROSITE" id="PS00167">
    <property type="entry name" value="TRP_SYNTHASE_ALPHA"/>
    <property type="match status" value="1"/>
</dbReference>
<keyword id="KW-0028">Amino-acid biosynthesis</keyword>
<keyword id="KW-0057">Aromatic amino acid biosynthesis</keyword>
<keyword id="KW-0456">Lyase</keyword>
<keyword id="KW-0822">Tryptophan biosynthesis</keyword>
<proteinExistence type="inferred from homology"/>
<accession>B8J160</accession>
<sequence length="255" mass="27505">MNLLEEKIRAANAAGRPALIPFLTAGFPDRATFWPTLMELDENGADIIEIGVPFSDPVADGPVVEEASRRALSDGVNLRGILAELAQRKGLVKAGLVLMGYLNPFLQYGYEKLAQDAARGGVHGFIVPDLPHEESGPLHRALKKEGIALIPLVGPNTSAERMALYAEEGEGYVYVVSVMGITGERGDVAPQVADTMRRARSVFSLPLALGFGLREPGQLRELPPDARPDAAVFGSALLNHLEEGHSAEEFMARWK</sequence>
<gene>
    <name evidence="1" type="primary">trpA</name>
    <name type="ordered locus">Ddes_1587</name>
</gene>
<comment type="function">
    <text evidence="1">The alpha subunit is responsible for the aldol cleavage of indoleglycerol phosphate to indole and glyceraldehyde 3-phosphate.</text>
</comment>
<comment type="catalytic activity">
    <reaction evidence="1">
        <text>(1S,2R)-1-C-(indol-3-yl)glycerol 3-phosphate + L-serine = D-glyceraldehyde 3-phosphate + L-tryptophan + H2O</text>
        <dbReference type="Rhea" id="RHEA:10532"/>
        <dbReference type="ChEBI" id="CHEBI:15377"/>
        <dbReference type="ChEBI" id="CHEBI:33384"/>
        <dbReference type="ChEBI" id="CHEBI:57912"/>
        <dbReference type="ChEBI" id="CHEBI:58866"/>
        <dbReference type="ChEBI" id="CHEBI:59776"/>
        <dbReference type="EC" id="4.2.1.20"/>
    </reaction>
</comment>
<comment type="pathway">
    <text evidence="1">Amino-acid biosynthesis; L-tryptophan biosynthesis; L-tryptophan from chorismate: step 5/5.</text>
</comment>
<comment type="subunit">
    <text evidence="1">Tetramer of two alpha and two beta chains.</text>
</comment>
<comment type="similarity">
    <text evidence="1">Belongs to the TrpA family.</text>
</comment>
<feature type="chain" id="PRO_1000203178" description="Tryptophan synthase alpha chain">
    <location>
        <begin position="1"/>
        <end position="255"/>
    </location>
</feature>
<feature type="active site" description="Proton acceptor" evidence="1">
    <location>
        <position position="49"/>
    </location>
</feature>
<feature type="active site" description="Proton acceptor" evidence="1">
    <location>
        <position position="60"/>
    </location>
</feature>